<keyword id="KW-0687">Ribonucleoprotein</keyword>
<keyword id="KW-0689">Ribosomal protein</keyword>
<organism>
    <name type="scientific">Burkholderia thailandensis (strain ATCC 700388 / DSM 13276 / CCUG 48851 / CIP 106301 / E264)</name>
    <dbReference type="NCBI Taxonomy" id="271848"/>
    <lineage>
        <taxon>Bacteria</taxon>
        <taxon>Pseudomonadati</taxon>
        <taxon>Pseudomonadota</taxon>
        <taxon>Betaproteobacteria</taxon>
        <taxon>Burkholderiales</taxon>
        <taxon>Burkholderiaceae</taxon>
        <taxon>Burkholderia</taxon>
        <taxon>pseudomallei group</taxon>
    </lineage>
</organism>
<feature type="chain" id="PRO_0000252500" description="Large ribosomal subunit protein bL19">
    <location>
        <begin position="1"/>
        <end position="129"/>
    </location>
</feature>
<comment type="function">
    <text evidence="1">This protein is located at the 30S-50S ribosomal subunit interface and may play a role in the structure and function of the aminoacyl-tRNA binding site.</text>
</comment>
<comment type="similarity">
    <text evidence="1">Belongs to the bacterial ribosomal protein bL19 family.</text>
</comment>
<protein>
    <recommendedName>
        <fullName evidence="1">Large ribosomal subunit protein bL19</fullName>
    </recommendedName>
    <alternativeName>
        <fullName evidence="2">50S ribosomal protein L19</fullName>
    </alternativeName>
</protein>
<gene>
    <name evidence="1" type="primary">rplS</name>
    <name type="ordered locus">BTH_I1664</name>
</gene>
<dbReference type="EMBL" id="CP000086">
    <property type="protein sequence ID" value="ABC37219.1"/>
    <property type="molecule type" value="Genomic_DNA"/>
</dbReference>
<dbReference type="RefSeq" id="WP_004189360.1">
    <property type="nucleotide sequence ID" value="NZ_CP008785.1"/>
</dbReference>
<dbReference type="SMR" id="Q2SXZ8"/>
<dbReference type="GeneID" id="93061076"/>
<dbReference type="KEGG" id="bte:BTH_I1664"/>
<dbReference type="HOGENOM" id="CLU_103507_1_0_4"/>
<dbReference type="Proteomes" id="UP000001930">
    <property type="component" value="Chromosome I"/>
</dbReference>
<dbReference type="GO" id="GO:0022625">
    <property type="term" value="C:cytosolic large ribosomal subunit"/>
    <property type="evidence" value="ECO:0007669"/>
    <property type="project" value="TreeGrafter"/>
</dbReference>
<dbReference type="GO" id="GO:0003735">
    <property type="term" value="F:structural constituent of ribosome"/>
    <property type="evidence" value="ECO:0007669"/>
    <property type="project" value="InterPro"/>
</dbReference>
<dbReference type="GO" id="GO:0006412">
    <property type="term" value="P:translation"/>
    <property type="evidence" value="ECO:0007669"/>
    <property type="project" value="UniProtKB-UniRule"/>
</dbReference>
<dbReference type="FunFam" id="2.30.30.790:FF:000001">
    <property type="entry name" value="50S ribosomal protein L19"/>
    <property type="match status" value="1"/>
</dbReference>
<dbReference type="Gene3D" id="2.30.30.790">
    <property type="match status" value="1"/>
</dbReference>
<dbReference type="HAMAP" id="MF_00402">
    <property type="entry name" value="Ribosomal_bL19"/>
    <property type="match status" value="1"/>
</dbReference>
<dbReference type="InterPro" id="IPR001857">
    <property type="entry name" value="Ribosomal_bL19"/>
</dbReference>
<dbReference type="InterPro" id="IPR018257">
    <property type="entry name" value="Ribosomal_bL19_CS"/>
</dbReference>
<dbReference type="InterPro" id="IPR038657">
    <property type="entry name" value="Ribosomal_bL19_sf"/>
</dbReference>
<dbReference type="InterPro" id="IPR008991">
    <property type="entry name" value="Translation_prot_SH3-like_sf"/>
</dbReference>
<dbReference type="NCBIfam" id="TIGR01024">
    <property type="entry name" value="rplS_bact"/>
    <property type="match status" value="1"/>
</dbReference>
<dbReference type="PANTHER" id="PTHR15680:SF9">
    <property type="entry name" value="LARGE RIBOSOMAL SUBUNIT PROTEIN BL19M"/>
    <property type="match status" value="1"/>
</dbReference>
<dbReference type="PANTHER" id="PTHR15680">
    <property type="entry name" value="RIBOSOMAL PROTEIN L19"/>
    <property type="match status" value="1"/>
</dbReference>
<dbReference type="Pfam" id="PF01245">
    <property type="entry name" value="Ribosomal_L19"/>
    <property type="match status" value="1"/>
</dbReference>
<dbReference type="PIRSF" id="PIRSF002191">
    <property type="entry name" value="Ribosomal_L19"/>
    <property type="match status" value="1"/>
</dbReference>
<dbReference type="PRINTS" id="PR00061">
    <property type="entry name" value="RIBOSOMALL19"/>
</dbReference>
<dbReference type="SUPFAM" id="SSF50104">
    <property type="entry name" value="Translation proteins SH3-like domain"/>
    <property type="match status" value="1"/>
</dbReference>
<dbReference type="PROSITE" id="PS01015">
    <property type="entry name" value="RIBOSOMAL_L19"/>
    <property type="match status" value="1"/>
</dbReference>
<accession>Q2SXZ8</accession>
<evidence type="ECO:0000255" key="1">
    <source>
        <dbReference type="HAMAP-Rule" id="MF_00402"/>
    </source>
</evidence>
<evidence type="ECO:0000305" key="2"/>
<proteinExistence type="inferred from homology"/>
<name>RL19_BURTA</name>
<sequence length="129" mass="14429">MNLIAKLEQEEIERALAGKTIPEFAPGDTVIVNVNVVEGNRKRVQAYEGVVIAKRNRGLNSSFIVRKISSGEGVERTFQTYSPLLASIVVKRRGDVRRAKLYYLRERSGKSARIKEKLVSKDRAAAAQQ</sequence>
<reference key="1">
    <citation type="journal article" date="2005" name="BMC Genomics">
        <title>Bacterial genome adaptation to niches: divergence of the potential virulence genes in three Burkholderia species of different survival strategies.</title>
        <authorList>
            <person name="Kim H.S."/>
            <person name="Schell M.A."/>
            <person name="Yu Y."/>
            <person name="Ulrich R.L."/>
            <person name="Sarria S.H."/>
            <person name="Nierman W.C."/>
            <person name="DeShazer D."/>
        </authorList>
    </citation>
    <scope>NUCLEOTIDE SEQUENCE [LARGE SCALE GENOMIC DNA]</scope>
    <source>
        <strain>ATCC 700388 / DSM 13276 / CCUG 48851 / CIP 106301 / E264</strain>
    </source>
</reference>